<feature type="chain" id="PRO_1000165624" description="Small ribosomal subunit protein uS13">
    <location>
        <begin position="1"/>
        <end position="121"/>
    </location>
</feature>
<feature type="region of interest" description="Disordered" evidence="2">
    <location>
        <begin position="91"/>
        <end position="121"/>
    </location>
</feature>
<feature type="compositionally biased region" description="Basic residues" evidence="2">
    <location>
        <begin position="106"/>
        <end position="121"/>
    </location>
</feature>
<comment type="function">
    <text evidence="1">Located at the top of the head of the 30S subunit, it contacts several helices of the 16S rRNA. In the 70S ribosome it contacts the 23S rRNA (bridge B1a) and protein L5 of the 50S subunit (bridge B1b), connecting the 2 subunits; these bridges are implicated in subunit movement. Contacts the tRNAs in the A and P-sites.</text>
</comment>
<comment type="subunit">
    <text evidence="1">Part of the 30S ribosomal subunit. Forms a loose heterodimer with protein S19. Forms two bridges to the 50S subunit in the 70S ribosome.</text>
</comment>
<comment type="similarity">
    <text evidence="1">Belongs to the universal ribosomal protein uS13 family.</text>
</comment>
<sequence length="121" mass="13709">MARIAGVDVPREKRIVISLTYIYGIGKQTAKEVLAEAGVSEDTRTRDLTEEELGKIREILDRIKVEGDLRREVNLNIKRLIEIGSYRGMRHRRGLPVRGQNTKNNARTRKGPSKTVAGKKK</sequence>
<reference key="1">
    <citation type="journal article" date="2011" name="J. Bacteriol.">
        <title>Genome sequence of lineage III Listeria monocytogenes strain HCC23.</title>
        <authorList>
            <person name="Steele C.L."/>
            <person name="Donaldson J.R."/>
            <person name="Paul D."/>
            <person name="Banes M.M."/>
            <person name="Arick T."/>
            <person name="Bridges S.M."/>
            <person name="Lawrence M.L."/>
        </authorList>
    </citation>
    <scope>NUCLEOTIDE SEQUENCE [LARGE SCALE GENOMIC DNA]</scope>
    <source>
        <strain>HCC23</strain>
    </source>
</reference>
<organism>
    <name type="scientific">Listeria monocytogenes serotype 4a (strain HCC23)</name>
    <dbReference type="NCBI Taxonomy" id="552536"/>
    <lineage>
        <taxon>Bacteria</taxon>
        <taxon>Bacillati</taxon>
        <taxon>Bacillota</taxon>
        <taxon>Bacilli</taxon>
        <taxon>Bacillales</taxon>
        <taxon>Listeriaceae</taxon>
        <taxon>Listeria</taxon>
    </lineage>
</organism>
<protein>
    <recommendedName>
        <fullName evidence="1">Small ribosomal subunit protein uS13</fullName>
    </recommendedName>
    <alternativeName>
        <fullName evidence="3">30S ribosomal protein S13</fullName>
    </alternativeName>
</protein>
<evidence type="ECO:0000255" key="1">
    <source>
        <dbReference type="HAMAP-Rule" id="MF_01315"/>
    </source>
</evidence>
<evidence type="ECO:0000256" key="2">
    <source>
        <dbReference type="SAM" id="MobiDB-lite"/>
    </source>
</evidence>
<evidence type="ECO:0000305" key="3"/>
<accession>B8DB32</accession>
<gene>
    <name evidence="1" type="primary">rpsM</name>
    <name type="ordered locus">LMHCC_2926</name>
</gene>
<proteinExistence type="inferred from homology"/>
<keyword id="KW-0687">Ribonucleoprotein</keyword>
<keyword id="KW-0689">Ribosomal protein</keyword>
<keyword id="KW-0694">RNA-binding</keyword>
<keyword id="KW-0699">rRNA-binding</keyword>
<keyword id="KW-0820">tRNA-binding</keyword>
<dbReference type="EMBL" id="CP001175">
    <property type="protein sequence ID" value="ACK41257.1"/>
    <property type="molecule type" value="Genomic_DNA"/>
</dbReference>
<dbReference type="RefSeq" id="WP_003723677.1">
    <property type="nucleotide sequence ID" value="NC_011660.1"/>
</dbReference>
<dbReference type="SMR" id="B8DB32"/>
<dbReference type="GeneID" id="93240489"/>
<dbReference type="KEGG" id="lmh:LMHCC_2926"/>
<dbReference type="HOGENOM" id="CLU_103849_1_1_9"/>
<dbReference type="GO" id="GO:0005829">
    <property type="term" value="C:cytosol"/>
    <property type="evidence" value="ECO:0007669"/>
    <property type="project" value="TreeGrafter"/>
</dbReference>
<dbReference type="GO" id="GO:0015935">
    <property type="term" value="C:small ribosomal subunit"/>
    <property type="evidence" value="ECO:0007669"/>
    <property type="project" value="TreeGrafter"/>
</dbReference>
<dbReference type="GO" id="GO:0019843">
    <property type="term" value="F:rRNA binding"/>
    <property type="evidence" value="ECO:0007669"/>
    <property type="project" value="UniProtKB-UniRule"/>
</dbReference>
<dbReference type="GO" id="GO:0003735">
    <property type="term" value="F:structural constituent of ribosome"/>
    <property type="evidence" value="ECO:0007669"/>
    <property type="project" value="InterPro"/>
</dbReference>
<dbReference type="GO" id="GO:0000049">
    <property type="term" value="F:tRNA binding"/>
    <property type="evidence" value="ECO:0007669"/>
    <property type="project" value="UniProtKB-UniRule"/>
</dbReference>
<dbReference type="GO" id="GO:0006412">
    <property type="term" value="P:translation"/>
    <property type="evidence" value="ECO:0007669"/>
    <property type="project" value="UniProtKB-UniRule"/>
</dbReference>
<dbReference type="FunFam" id="1.10.8.50:FF:000001">
    <property type="entry name" value="30S ribosomal protein S13"/>
    <property type="match status" value="1"/>
</dbReference>
<dbReference type="FunFam" id="4.10.910.10:FF:000001">
    <property type="entry name" value="30S ribosomal protein S13"/>
    <property type="match status" value="1"/>
</dbReference>
<dbReference type="Gene3D" id="1.10.8.50">
    <property type="match status" value="1"/>
</dbReference>
<dbReference type="Gene3D" id="4.10.910.10">
    <property type="entry name" value="30s ribosomal protein s13, domain 2"/>
    <property type="match status" value="1"/>
</dbReference>
<dbReference type="HAMAP" id="MF_01315">
    <property type="entry name" value="Ribosomal_uS13"/>
    <property type="match status" value="1"/>
</dbReference>
<dbReference type="InterPro" id="IPR027437">
    <property type="entry name" value="Rbsml_uS13_C"/>
</dbReference>
<dbReference type="InterPro" id="IPR001892">
    <property type="entry name" value="Ribosomal_uS13"/>
</dbReference>
<dbReference type="InterPro" id="IPR010979">
    <property type="entry name" value="Ribosomal_uS13-like_H2TH"/>
</dbReference>
<dbReference type="InterPro" id="IPR019980">
    <property type="entry name" value="Ribosomal_uS13_bac-type"/>
</dbReference>
<dbReference type="InterPro" id="IPR018269">
    <property type="entry name" value="Ribosomal_uS13_CS"/>
</dbReference>
<dbReference type="NCBIfam" id="TIGR03631">
    <property type="entry name" value="uS13_bact"/>
    <property type="match status" value="1"/>
</dbReference>
<dbReference type="PANTHER" id="PTHR10871">
    <property type="entry name" value="30S RIBOSOMAL PROTEIN S13/40S RIBOSOMAL PROTEIN S18"/>
    <property type="match status" value="1"/>
</dbReference>
<dbReference type="PANTHER" id="PTHR10871:SF1">
    <property type="entry name" value="SMALL RIBOSOMAL SUBUNIT PROTEIN US13M"/>
    <property type="match status" value="1"/>
</dbReference>
<dbReference type="Pfam" id="PF00416">
    <property type="entry name" value="Ribosomal_S13"/>
    <property type="match status" value="1"/>
</dbReference>
<dbReference type="PIRSF" id="PIRSF002134">
    <property type="entry name" value="Ribosomal_S13"/>
    <property type="match status" value="1"/>
</dbReference>
<dbReference type="SUPFAM" id="SSF46946">
    <property type="entry name" value="S13-like H2TH domain"/>
    <property type="match status" value="1"/>
</dbReference>
<dbReference type="PROSITE" id="PS00646">
    <property type="entry name" value="RIBOSOMAL_S13_1"/>
    <property type="match status" value="1"/>
</dbReference>
<dbReference type="PROSITE" id="PS50159">
    <property type="entry name" value="RIBOSOMAL_S13_2"/>
    <property type="match status" value="1"/>
</dbReference>
<name>RS13_LISMH</name>